<comment type="function">
    <text evidence="1">Catalyzes the anti-1,4-elimination of the C-3 phosphate and the C-6 proR hydrogen from 5-enolpyruvylshikimate-3-phosphate (EPSP) to yield chorismate, which is the branch point compound that serves as the starting substrate for the three terminal pathways of aromatic amino acid biosynthesis. This reaction introduces a second double bond into the aromatic ring system.</text>
</comment>
<comment type="catalytic activity">
    <reaction evidence="1">
        <text>5-O-(1-carboxyvinyl)-3-phosphoshikimate = chorismate + phosphate</text>
        <dbReference type="Rhea" id="RHEA:21020"/>
        <dbReference type="ChEBI" id="CHEBI:29748"/>
        <dbReference type="ChEBI" id="CHEBI:43474"/>
        <dbReference type="ChEBI" id="CHEBI:57701"/>
        <dbReference type="EC" id="4.2.3.5"/>
    </reaction>
</comment>
<comment type="cofactor">
    <cofactor evidence="1">
        <name>FMNH2</name>
        <dbReference type="ChEBI" id="CHEBI:57618"/>
    </cofactor>
    <text evidence="1">Reduced FMN (FMNH(2)).</text>
</comment>
<comment type="pathway">
    <text evidence="1">Metabolic intermediate biosynthesis; chorismate biosynthesis; chorismate from D-erythrose 4-phosphate and phosphoenolpyruvate: step 7/7.</text>
</comment>
<comment type="subunit">
    <text evidence="1">Homotetramer.</text>
</comment>
<comment type="similarity">
    <text evidence="1">Belongs to the chorismate synthase family.</text>
</comment>
<protein>
    <recommendedName>
        <fullName evidence="1">Chorismate synthase</fullName>
        <shortName evidence="1">CS</shortName>
        <ecNumber evidence="1">4.2.3.5</ecNumber>
    </recommendedName>
    <alternativeName>
        <fullName evidence="1">5-enolpyruvylshikimate-3-phosphate phospholyase</fullName>
    </alternativeName>
</protein>
<name>AROC_ACIAD</name>
<organism>
    <name type="scientific">Acinetobacter baylyi (strain ATCC 33305 / BD413 / ADP1)</name>
    <dbReference type="NCBI Taxonomy" id="62977"/>
    <lineage>
        <taxon>Bacteria</taxon>
        <taxon>Pseudomonadati</taxon>
        <taxon>Pseudomonadota</taxon>
        <taxon>Gammaproteobacteria</taxon>
        <taxon>Moraxellales</taxon>
        <taxon>Moraxellaceae</taxon>
        <taxon>Acinetobacter</taxon>
    </lineage>
</organism>
<gene>
    <name evidence="1" type="primary">aroC</name>
    <name type="ordered locus">ACIAD2028</name>
</gene>
<sequence>MAGNSIGQLFRVTTCGESHGVGLMAIVDGVPPGLELCEEDLQKDLDRRKPGTSKFATQRKEPDQVKIISGVFEGKTTGTSIGLYIENTDQKSKDYGNIAQTFRPGHADYTYTQKYGFRDYRGGGRSSARETAMRVAAGAIAKKYLAEKFGLVVRGHVIQIGNEVAEKLDWNEVSQNPFFCGDVDAVPRFEALVTSLREQGTSCGAKLEILAEQVPVGWGEPVFDRLDADIAHAMMSINAVKGVEIGDGFAVAGQFGHETRDELSTQGFLANHAGGILGGISSGQTIRVAIALKPTASITTSGKTINLDREDTDVLTKGRHDPCVGVRATPIAEAMLAIVLMDHFLRHRAQNADVVMPFEPIAP</sequence>
<proteinExistence type="inferred from homology"/>
<keyword id="KW-0028">Amino-acid biosynthesis</keyword>
<keyword id="KW-0057">Aromatic amino acid biosynthesis</keyword>
<keyword id="KW-0274">FAD</keyword>
<keyword id="KW-0285">Flavoprotein</keyword>
<keyword id="KW-0288">FMN</keyword>
<keyword id="KW-0456">Lyase</keyword>
<keyword id="KW-0521">NADP</keyword>
<accession>Q6FAR2</accession>
<reference key="1">
    <citation type="journal article" date="2004" name="Nucleic Acids Res.">
        <title>Unique features revealed by the genome sequence of Acinetobacter sp. ADP1, a versatile and naturally transformation competent bacterium.</title>
        <authorList>
            <person name="Barbe V."/>
            <person name="Vallenet D."/>
            <person name="Fonknechten N."/>
            <person name="Kreimeyer A."/>
            <person name="Oztas S."/>
            <person name="Labarre L."/>
            <person name="Cruveiller S."/>
            <person name="Robert C."/>
            <person name="Duprat S."/>
            <person name="Wincker P."/>
            <person name="Ornston L.N."/>
            <person name="Weissenbach J."/>
            <person name="Marliere P."/>
            <person name="Cohen G.N."/>
            <person name="Medigue C."/>
        </authorList>
    </citation>
    <scope>NUCLEOTIDE SEQUENCE [LARGE SCALE GENOMIC DNA]</scope>
    <source>
        <strain>ATCC 33305 / BD413 / ADP1</strain>
    </source>
</reference>
<dbReference type="EC" id="4.2.3.5" evidence="1"/>
<dbReference type="EMBL" id="CR543861">
    <property type="protein sequence ID" value="CAG68851.1"/>
    <property type="molecule type" value="Genomic_DNA"/>
</dbReference>
<dbReference type="RefSeq" id="WP_004927424.1">
    <property type="nucleotide sequence ID" value="NC_005966.1"/>
</dbReference>
<dbReference type="SMR" id="Q6FAR2"/>
<dbReference type="STRING" id="202950.GCA_001485005_00344"/>
<dbReference type="GeneID" id="45234387"/>
<dbReference type="KEGG" id="aci:ACIAD2028"/>
<dbReference type="eggNOG" id="COG0082">
    <property type="taxonomic scope" value="Bacteria"/>
</dbReference>
<dbReference type="HOGENOM" id="CLU_034547_0_2_6"/>
<dbReference type="OrthoDB" id="9771806at2"/>
<dbReference type="BioCyc" id="ASP62977:ACIAD_RS09340-MONOMER"/>
<dbReference type="UniPathway" id="UPA00053">
    <property type="reaction ID" value="UER00090"/>
</dbReference>
<dbReference type="Proteomes" id="UP000000430">
    <property type="component" value="Chromosome"/>
</dbReference>
<dbReference type="GO" id="GO:0005829">
    <property type="term" value="C:cytosol"/>
    <property type="evidence" value="ECO:0007669"/>
    <property type="project" value="TreeGrafter"/>
</dbReference>
<dbReference type="GO" id="GO:0004107">
    <property type="term" value="F:chorismate synthase activity"/>
    <property type="evidence" value="ECO:0007669"/>
    <property type="project" value="UniProtKB-UniRule"/>
</dbReference>
<dbReference type="GO" id="GO:0010181">
    <property type="term" value="F:FMN binding"/>
    <property type="evidence" value="ECO:0007669"/>
    <property type="project" value="TreeGrafter"/>
</dbReference>
<dbReference type="GO" id="GO:0008652">
    <property type="term" value="P:amino acid biosynthetic process"/>
    <property type="evidence" value="ECO:0007669"/>
    <property type="project" value="UniProtKB-KW"/>
</dbReference>
<dbReference type="GO" id="GO:0009073">
    <property type="term" value="P:aromatic amino acid family biosynthetic process"/>
    <property type="evidence" value="ECO:0007669"/>
    <property type="project" value="UniProtKB-KW"/>
</dbReference>
<dbReference type="GO" id="GO:0009423">
    <property type="term" value="P:chorismate biosynthetic process"/>
    <property type="evidence" value="ECO:0007669"/>
    <property type="project" value="UniProtKB-UniRule"/>
</dbReference>
<dbReference type="CDD" id="cd07304">
    <property type="entry name" value="Chorismate_synthase"/>
    <property type="match status" value="1"/>
</dbReference>
<dbReference type="FunFam" id="3.60.150.10:FF:000001">
    <property type="entry name" value="Chorismate synthase"/>
    <property type="match status" value="1"/>
</dbReference>
<dbReference type="Gene3D" id="3.60.150.10">
    <property type="entry name" value="Chorismate synthase AroC"/>
    <property type="match status" value="1"/>
</dbReference>
<dbReference type="HAMAP" id="MF_00300">
    <property type="entry name" value="Chorismate_synth"/>
    <property type="match status" value="1"/>
</dbReference>
<dbReference type="InterPro" id="IPR000453">
    <property type="entry name" value="Chorismate_synth"/>
</dbReference>
<dbReference type="InterPro" id="IPR035904">
    <property type="entry name" value="Chorismate_synth_AroC_sf"/>
</dbReference>
<dbReference type="InterPro" id="IPR020541">
    <property type="entry name" value="Chorismate_synthase_CS"/>
</dbReference>
<dbReference type="NCBIfam" id="TIGR00033">
    <property type="entry name" value="aroC"/>
    <property type="match status" value="1"/>
</dbReference>
<dbReference type="NCBIfam" id="NF003793">
    <property type="entry name" value="PRK05382.1"/>
    <property type="match status" value="1"/>
</dbReference>
<dbReference type="PANTHER" id="PTHR21085">
    <property type="entry name" value="CHORISMATE SYNTHASE"/>
    <property type="match status" value="1"/>
</dbReference>
<dbReference type="PANTHER" id="PTHR21085:SF0">
    <property type="entry name" value="CHORISMATE SYNTHASE"/>
    <property type="match status" value="1"/>
</dbReference>
<dbReference type="Pfam" id="PF01264">
    <property type="entry name" value="Chorismate_synt"/>
    <property type="match status" value="1"/>
</dbReference>
<dbReference type="PIRSF" id="PIRSF001456">
    <property type="entry name" value="Chorismate_synth"/>
    <property type="match status" value="1"/>
</dbReference>
<dbReference type="SUPFAM" id="SSF103263">
    <property type="entry name" value="Chorismate synthase, AroC"/>
    <property type="match status" value="1"/>
</dbReference>
<dbReference type="PROSITE" id="PS00787">
    <property type="entry name" value="CHORISMATE_SYNTHASE_1"/>
    <property type="match status" value="1"/>
</dbReference>
<dbReference type="PROSITE" id="PS00788">
    <property type="entry name" value="CHORISMATE_SYNTHASE_2"/>
    <property type="match status" value="1"/>
</dbReference>
<dbReference type="PROSITE" id="PS00789">
    <property type="entry name" value="CHORISMATE_SYNTHASE_3"/>
    <property type="match status" value="1"/>
</dbReference>
<evidence type="ECO:0000255" key="1">
    <source>
        <dbReference type="HAMAP-Rule" id="MF_00300"/>
    </source>
</evidence>
<feature type="chain" id="PRO_0000140535" description="Chorismate synthase">
    <location>
        <begin position="1"/>
        <end position="363"/>
    </location>
</feature>
<feature type="binding site" evidence="1">
    <location>
        <position position="48"/>
    </location>
    <ligand>
        <name>NADP(+)</name>
        <dbReference type="ChEBI" id="CHEBI:58349"/>
    </ligand>
</feature>
<feature type="binding site" evidence="1">
    <location>
        <begin position="125"/>
        <end position="127"/>
    </location>
    <ligand>
        <name>FMN</name>
        <dbReference type="ChEBI" id="CHEBI:58210"/>
    </ligand>
</feature>
<feature type="binding site" evidence="1">
    <location>
        <begin position="238"/>
        <end position="239"/>
    </location>
    <ligand>
        <name>FMN</name>
        <dbReference type="ChEBI" id="CHEBI:58210"/>
    </ligand>
</feature>
<feature type="binding site" evidence="1">
    <location>
        <position position="278"/>
    </location>
    <ligand>
        <name>FMN</name>
        <dbReference type="ChEBI" id="CHEBI:58210"/>
    </ligand>
</feature>
<feature type="binding site" evidence="1">
    <location>
        <begin position="293"/>
        <end position="297"/>
    </location>
    <ligand>
        <name>FMN</name>
        <dbReference type="ChEBI" id="CHEBI:58210"/>
    </ligand>
</feature>
<feature type="binding site" evidence="1">
    <location>
        <position position="319"/>
    </location>
    <ligand>
        <name>FMN</name>
        <dbReference type="ChEBI" id="CHEBI:58210"/>
    </ligand>
</feature>